<organism>
    <name type="scientific">Schizosaccharomyces pombe (strain 972 / ATCC 24843)</name>
    <name type="common">Fission yeast</name>
    <dbReference type="NCBI Taxonomy" id="284812"/>
    <lineage>
        <taxon>Eukaryota</taxon>
        <taxon>Fungi</taxon>
        <taxon>Dikarya</taxon>
        <taxon>Ascomycota</taxon>
        <taxon>Taphrinomycotina</taxon>
        <taxon>Schizosaccharomycetes</taxon>
        <taxon>Schizosaccharomycetales</taxon>
        <taxon>Schizosaccharomycetaceae</taxon>
        <taxon>Schizosaccharomyces</taxon>
    </lineage>
</organism>
<gene>
    <name evidence="6" type="primary">sec72</name>
    <name type="synonym">sec7b</name>
    <name type="ORF">SPAC30.01c</name>
</gene>
<evidence type="ECO:0000250" key="1">
    <source>
        <dbReference type="UniProtKB" id="P11075"/>
    </source>
</evidence>
<evidence type="ECO:0000255" key="2">
    <source>
        <dbReference type="PROSITE-ProRule" id="PRU00189"/>
    </source>
</evidence>
<evidence type="ECO:0000256" key="3">
    <source>
        <dbReference type="SAM" id="MobiDB-lite"/>
    </source>
</evidence>
<evidence type="ECO:0000269" key="4">
    <source>
    </source>
</evidence>
<evidence type="ECO:0000269" key="5">
    <source>
    </source>
</evidence>
<evidence type="ECO:0000303" key="6">
    <source>
    </source>
</evidence>
<evidence type="ECO:0000305" key="7">
    <source>
    </source>
</evidence>
<sequence length="1822" mass="206800">MQDASEPVINMPALPMNSVNEQHDRHEDLPEVGTTSVTKIINDSDNEDDENGMDLGRVASESLEGDAVVSIDINTEDSSLSPAKQENEKSPEGIEQKYQEEDLKDDKKSNETIATPVPDAASRASLEKQKSGLTNLEKSTHVVLIKCIEQLIQIKVCMKNEKMKNLMEQLKPLLQTECQFDKFLIVELFQYCFESSQDEVMNISLDTISKLASFAYFSSKDKTPASFGPPKSLLQCMVDMVCDSINDEVVDGNLQLNVVKALSAFILCSEQDSMLHGAILLNSVRKLFNVFLLGDSDTIQSVAQASLTQAVTVVYERLRASHTQSNSTSALPEEDASVTENWVHDEDEPDKKITLHSMASAGTSSLDHVKVDADDPAVTSVENSSIQDAFLVFRSMCRLAVRQTSPDKVSNIRSQAMRAKLISLHLIYRILEKNSDLFMDPTLQFRGIPALKGMTLVHASRQYICLVLSRNAVSPVPQVFEVCCDIFYLMVFSLRAHFKQEIEVFFREVYFPMLDLKNTSYNQKLHTLLIIQRICLNPRALVELYINYDCDRSSTTNVFEQLLFSISKVTTNGPSETISEDIEEILPSLESSERSSTPFLNTNSASLKSEVVQLTTFSDFQLKLKTLQCVLDILQSLSNWAESGLYLSRRGVSTDEQGFVGDYDALSRSDTPVTNPYYNGKQSFEANSHSSSSIALADPSQFESNKQRKKLLRTCINKFNYKPTRGLKMLSENEYVDINDPKAIAEFLFRADGIDKTTLGDYLGEGDEKSISVMHEFIDCLSFINLKFVDALRRLLQCFRLPGEAQKIDRIMLKFSERYMKENPSAFANADTAYILAYSIILLNTDLHSPRIKNKMTKEDFIKNNRGINDGADLDEDYLGFVYDDILKNEIAMKDDQELAAIAPLMNNFSTSSGFTTFTSNGRDLQRVACIQASEEMANKATSVLKKLLYQQKHGSQKTNVYYNATHFEHIGPMLEATWMPILAALSNPLQNSDYVNELNMCLDGFQLVVRIACLFDLDLIRDAFIKTLTNFTNLHSTSEIKLRNTMVIKTLLRIASTEGNNLKDSWKDILTIISQLERVQLIGVGVDETEVPDVINARVRRKNVNIGSSNSIRHVSGSTSRSTRTRSLSKPLSPEAVSELMSTEVVLSIDRIFTQTSSLSGSAIVSFFKALCEVSWDEITSSSDLEQPRLYSLQKLVEISYYNMQRIRVEWSSIWNVLGRFFNMVGSDENRHVAVFALDSLRQLSMHFLEIEELSLFSFQKEFLKPFEYVMASDTVVEVKELVLQCVKQMIQAKISKIKSGWKTLFGVFTFAAKARSEILISMTFDTLVNLFSEHYDTLMQQNCLIDMLISFTELCKNGTNQKISLQSLEIIREVYSSLSTMIKEGLSSKPSVNETFSKYVFPVLFAYYDIIMSAEDLEVRSRALQNLFYIFLEESDDFTEETWEVVSRKFIFPIFSIFGPEADEATVMLRDEEIRTWQSTTLVEALRSLVTLLTRRFDKLHNLLKGYLWLFSNCICRDNITLSRIGTNCMQQLLSGNAYRFEVKDWNLVADMFIELFKETTPHQLLLLETFSNGQGAPVYSENENTQLSHKRGGSLPETSRSISTSSISPEKQMEFRSMIRKCILQLLLISIVAELLDNEEVFNHIPHEHVLKITVAIYDSWQFARKFNEDKSLRITLLNVGFMKQLPNLLRQETASALLYITLLFRLLKTRDPLGKTETDQKIHKLLFPVCAEMLDMYASLVVEKHTRNHAAWQPVIATILDSILNLPLELFSENIHTLYFSCCSMIAKENLDDQLRELLKNYFNRVGHILLNLNAQQE</sequence>
<reference key="1">
    <citation type="journal article" date="2002" name="Nature">
        <title>The genome sequence of Schizosaccharomyces pombe.</title>
        <authorList>
            <person name="Wood V."/>
            <person name="Gwilliam R."/>
            <person name="Rajandream M.A."/>
            <person name="Lyne M.H."/>
            <person name="Lyne R."/>
            <person name="Stewart A."/>
            <person name="Sgouros J.G."/>
            <person name="Peat N."/>
            <person name="Hayles J."/>
            <person name="Baker S.G."/>
            <person name="Basham D."/>
            <person name="Bowman S."/>
            <person name="Brooks K."/>
            <person name="Brown D."/>
            <person name="Brown S."/>
            <person name="Chillingworth T."/>
            <person name="Churcher C.M."/>
            <person name="Collins M."/>
            <person name="Connor R."/>
            <person name="Cronin A."/>
            <person name="Davis P."/>
            <person name="Feltwell T."/>
            <person name="Fraser A."/>
            <person name="Gentles S."/>
            <person name="Goble A."/>
            <person name="Hamlin N."/>
            <person name="Harris D.E."/>
            <person name="Hidalgo J."/>
            <person name="Hodgson G."/>
            <person name="Holroyd S."/>
            <person name="Hornsby T."/>
            <person name="Howarth S."/>
            <person name="Huckle E.J."/>
            <person name="Hunt S."/>
            <person name="Jagels K."/>
            <person name="James K.D."/>
            <person name="Jones L."/>
            <person name="Jones M."/>
            <person name="Leather S."/>
            <person name="McDonald S."/>
            <person name="McLean J."/>
            <person name="Mooney P."/>
            <person name="Moule S."/>
            <person name="Mungall K.L."/>
            <person name="Murphy L.D."/>
            <person name="Niblett D."/>
            <person name="Odell C."/>
            <person name="Oliver K."/>
            <person name="O'Neil S."/>
            <person name="Pearson D."/>
            <person name="Quail M.A."/>
            <person name="Rabbinowitsch E."/>
            <person name="Rutherford K.M."/>
            <person name="Rutter S."/>
            <person name="Saunders D."/>
            <person name="Seeger K."/>
            <person name="Sharp S."/>
            <person name="Skelton J."/>
            <person name="Simmonds M.N."/>
            <person name="Squares R."/>
            <person name="Squares S."/>
            <person name="Stevens K."/>
            <person name="Taylor K."/>
            <person name="Taylor R.G."/>
            <person name="Tivey A."/>
            <person name="Walsh S.V."/>
            <person name="Warren T."/>
            <person name="Whitehead S."/>
            <person name="Woodward J.R."/>
            <person name="Volckaert G."/>
            <person name="Aert R."/>
            <person name="Robben J."/>
            <person name="Grymonprez B."/>
            <person name="Weltjens I."/>
            <person name="Vanstreels E."/>
            <person name="Rieger M."/>
            <person name="Schaefer M."/>
            <person name="Mueller-Auer S."/>
            <person name="Gabel C."/>
            <person name="Fuchs M."/>
            <person name="Duesterhoeft A."/>
            <person name="Fritzc C."/>
            <person name="Holzer E."/>
            <person name="Moestl D."/>
            <person name="Hilbert H."/>
            <person name="Borzym K."/>
            <person name="Langer I."/>
            <person name="Beck A."/>
            <person name="Lehrach H."/>
            <person name="Reinhardt R."/>
            <person name="Pohl T.M."/>
            <person name="Eger P."/>
            <person name="Zimmermann W."/>
            <person name="Wedler H."/>
            <person name="Wambutt R."/>
            <person name="Purnelle B."/>
            <person name="Goffeau A."/>
            <person name="Cadieu E."/>
            <person name="Dreano S."/>
            <person name="Gloux S."/>
            <person name="Lelaure V."/>
            <person name="Mottier S."/>
            <person name="Galibert F."/>
            <person name="Aves S.J."/>
            <person name="Xiang Z."/>
            <person name="Hunt C."/>
            <person name="Moore K."/>
            <person name="Hurst S.M."/>
            <person name="Lucas M."/>
            <person name="Rochet M."/>
            <person name="Gaillardin C."/>
            <person name="Tallada V.A."/>
            <person name="Garzon A."/>
            <person name="Thode G."/>
            <person name="Daga R.R."/>
            <person name="Cruzado L."/>
            <person name="Jimenez J."/>
            <person name="Sanchez M."/>
            <person name="del Rey F."/>
            <person name="Benito J."/>
            <person name="Dominguez A."/>
            <person name="Revuelta J.L."/>
            <person name="Moreno S."/>
            <person name="Armstrong J."/>
            <person name="Forsburg S.L."/>
            <person name="Cerutti L."/>
            <person name="Lowe T."/>
            <person name="McCombie W.R."/>
            <person name="Paulsen I."/>
            <person name="Potashkin J."/>
            <person name="Shpakovski G.V."/>
            <person name="Ussery D."/>
            <person name="Barrell B.G."/>
            <person name="Nurse P."/>
        </authorList>
    </citation>
    <scope>NUCLEOTIDE SEQUENCE [LARGE SCALE GENOMIC DNA]</scope>
    <source>
        <strain>972 / ATCC 24843</strain>
    </source>
</reference>
<reference key="2">
    <citation type="journal article" date="2008" name="J. Proteome Res.">
        <title>Phosphoproteome analysis of fission yeast.</title>
        <authorList>
            <person name="Wilson-Grady J.T."/>
            <person name="Villen J."/>
            <person name="Gygi S.P."/>
        </authorList>
    </citation>
    <scope>PHOSPHORYLATION [LARGE SCALE ANALYSIS] AT SER-44; SER-122; SER-125; THR-597; SER-653; THR-654; SER-669; SER-1110; SER-1606 AND SER-1609</scope>
    <scope>IDENTIFICATION BY MASS SPECTROMETRY</scope>
</reference>
<reference key="3">
    <citation type="journal article" date="2013" name="PLoS ONE">
        <title>Haploinsufficiency of the Sec7 guanine nucleotide exchange factor gea1 impairs septation in fission yeast.</title>
        <authorList>
            <person name="Eckler A.M."/>
            <person name="Wilder C."/>
            <person name="Castanon A."/>
            <person name="Ferris V.M."/>
            <person name="Lamere R.A."/>
            <person name="Perrin B.A."/>
            <person name="Pearlman R."/>
            <person name="White B."/>
            <person name="Byrd C."/>
            <person name="Ludvik N."/>
            <person name="Nichols N."/>
            <person name="Poole-Sumrall K."/>
            <person name="Sztul E."/>
            <person name="Styers M.L."/>
        </authorList>
    </citation>
    <scope>FUNCTION</scope>
</reference>
<reference key="4">
    <citation type="journal article" date="2021" name="Genomics Inform.">
        <title>Knockdown of vps54 aggravates tamoxifen-induced cytotoxicity in fission yeast.</title>
        <authorList>
            <person name="Lee S."/>
            <person name="Nam M."/>
            <person name="Lee A.R."/>
            <person name="Baek S.T."/>
            <person name="Kim M.J."/>
            <person name="Kim J.S."/>
            <person name="Kong A.H."/>
            <person name="Lee M."/>
            <person name="Lee S.J."/>
            <person name="Kim S.Y."/>
            <person name="Kim D.U."/>
            <person name="Hoe K.L."/>
        </authorList>
    </citation>
    <scope>FUNCTION</scope>
    <scope>DISRUPTION PHENOTYPE</scope>
</reference>
<keyword id="KW-0963">Cytoplasm</keyword>
<keyword id="KW-0968">Cytoplasmic vesicle</keyword>
<keyword id="KW-0333">Golgi apparatus</keyword>
<keyword id="KW-0472">Membrane</keyword>
<keyword id="KW-0597">Phosphoprotein</keyword>
<keyword id="KW-0653">Protein transport</keyword>
<keyword id="KW-1185">Reference proteome</keyword>
<keyword id="KW-0813">Transport</keyword>
<name>SEC72_SCHPO</name>
<dbReference type="EMBL" id="CU329670">
    <property type="protein sequence ID" value="CAB66460.1"/>
    <property type="molecule type" value="Genomic_DNA"/>
</dbReference>
<dbReference type="PIR" id="T50207">
    <property type="entry name" value="T50207"/>
</dbReference>
<dbReference type="RefSeq" id="NP_594555.1">
    <property type="nucleotide sequence ID" value="NM_001019984.2"/>
</dbReference>
<dbReference type="SMR" id="Q9P7V5"/>
<dbReference type="BioGRID" id="278583">
    <property type="interactions" value="45"/>
</dbReference>
<dbReference type="FunCoup" id="Q9P7V5">
    <property type="interactions" value="517"/>
</dbReference>
<dbReference type="STRING" id="284812.Q9P7V5"/>
<dbReference type="iPTMnet" id="Q9P7V5"/>
<dbReference type="PaxDb" id="4896-SPAC30.01c.1"/>
<dbReference type="EnsemblFungi" id="SPAC30.01c.1">
    <property type="protein sequence ID" value="SPAC30.01c.1:pep"/>
    <property type="gene ID" value="SPAC30.01c"/>
</dbReference>
<dbReference type="GeneID" id="2542107"/>
<dbReference type="KEGG" id="spo:2542107"/>
<dbReference type="PomBase" id="SPAC30.01c">
    <property type="gene designation" value="sec72"/>
</dbReference>
<dbReference type="VEuPathDB" id="FungiDB:SPAC30.01c"/>
<dbReference type="eggNOG" id="KOG0929">
    <property type="taxonomic scope" value="Eukaryota"/>
</dbReference>
<dbReference type="HOGENOM" id="CLU_000691_1_1_1"/>
<dbReference type="InParanoid" id="Q9P7V5"/>
<dbReference type="OMA" id="FWKSNEM"/>
<dbReference type="PhylomeDB" id="Q9P7V5"/>
<dbReference type="Reactome" id="R-SPO-6811438">
    <property type="pathway name" value="Intra-Golgi traffic"/>
</dbReference>
<dbReference type="PRO" id="PR:Q9P7V5"/>
<dbReference type="Proteomes" id="UP000002485">
    <property type="component" value="Chromosome I"/>
</dbReference>
<dbReference type="GO" id="GO:0030663">
    <property type="term" value="C:COPI-coated vesicle membrane"/>
    <property type="evidence" value="ECO:0007669"/>
    <property type="project" value="UniProtKB-SubCell"/>
</dbReference>
<dbReference type="GO" id="GO:0012507">
    <property type="term" value="C:ER to Golgi transport vesicle membrane"/>
    <property type="evidence" value="ECO:0007669"/>
    <property type="project" value="UniProtKB-SubCell"/>
</dbReference>
<dbReference type="GO" id="GO:0000137">
    <property type="term" value="C:Golgi cis cisterna"/>
    <property type="evidence" value="ECO:0000314"/>
    <property type="project" value="PomBase"/>
</dbReference>
<dbReference type="GO" id="GO:0000138">
    <property type="term" value="C:Golgi trans cisterna"/>
    <property type="evidence" value="ECO:0000314"/>
    <property type="project" value="PomBase"/>
</dbReference>
<dbReference type="GO" id="GO:0005085">
    <property type="term" value="F:guanyl-nucleotide exchange factor activity"/>
    <property type="evidence" value="ECO:0000266"/>
    <property type="project" value="PomBase"/>
</dbReference>
<dbReference type="GO" id="GO:0006888">
    <property type="term" value="P:endoplasmic reticulum to Golgi vesicle-mediated transport"/>
    <property type="evidence" value="ECO:0000266"/>
    <property type="project" value="PomBase"/>
</dbReference>
<dbReference type="GO" id="GO:0006886">
    <property type="term" value="P:intracellular protein transport"/>
    <property type="evidence" value="ECO:0000266"/>
    <property type="project" value="PomBase"/>
</dbReference>
<dbReference type="GO" id="GO:0032012">
    <property type="term" value="P:regulation of ARF protein signal transduction"/>
    <property type="evidence" value="ECO:0007669"/>
    <property type="project" value="InterPro"/>
</dbReference>
<dbReference type="CDD" id="cd00171">
    <property type="entry name" value="Sec7"/>
    <property type="match status" value="1"/>
</dbReference>
<dbReference type="FunFam" id="1.10.1000.11:FF:000003">
    <property type="entry name" value="Brefeldin A-inhibited guanine nucleotide-exchange protein 1"/>
    <property type="match status" value="1"/>
</dbReference>
<dbReference type="FunFam" id="1.10.220.20:FF:000002">
    <property type="entry name" value="Brefeldin A-inhibited guanine nucleotide-exchange protein 1"/>
    <property type="match status" value="1"/>
</dbReference>
<dbReference type="Gene3D" id="1.10.220.20">
    <property type="match status" value="1"/>
</dbReference>
<dbReference type="Gene3D" id="1.10.1000.11">
    <property type="entry name" value="Arf Nucleotide-binding Site Opener,domain 2"/>
    <property type="match status" value="1"/>
</dbReference>
<dbReference type="InterPro" id="IPR016024">
    <property type="entry name" value="ARM-type_fold"/>
</dbReference>
<dbReference type="InterPro" id="IPR032629">
    <property type="entry name" value="DCB_dom"/>
</dbReference>
<dbReference type="InterPro" id="IPR015403">
    <property type="entry name" value="Mon2/Sec7/BIG1-like_HDS"/>
</dbReference>
<dbReference type="InterPro" id="IPR032691">
    <property type="entry name" value="Mon2/Sec7/BIG1-like_HUS"/>
</dbReference>
<dbReference type="InterPro" id="IPR046455">
    <property type="entry name" value="Sec7/BIG1-like_C"/>
</dbReference>
<dbReference type="InterPro" id="IPR023394">
    <property type="entry name" value="Sec7_C_sf"/>
</dbReference>
<dbReference type="InterPro" id="IPR000904">
    <property type="entry name" value="Sec7_dom"/>
</dbReference>
<dbReference type="InterPro" id="IPR035999">
    <property type="entry name" value="Sec7_dom_sf"/>
</dbReference>
<dbReference type="PANTHER" id="PTHR10663">
    <property type="entry name" value="GUANYL-NUCLEOTIDE EXCHANGE FACTOR"/>
    <property type="match status" value="1"/>
</dbReference>
<dbReference type="PANTHER" id="PTHR10663:SF375">
    <property type="entry name" value="LD29171P"/>
    <property type="match status" value="1"/>
</dbReference>
<dbReference type="Pfam" id="PF20252">
    <property type="entry name" value="BIG2_C"/>
    <property type="match status" value="1"/>
</dbReference>
<dbReference type="Pfam" id="PF16213">
    <property type="entry name" value="DCB"/>
    <property type="match status" value="1"/>
</dbReference>
<dbReference type="Pfam" id="PF01369">
    <property type="entry name" value="Sec7"/>
    <property type="match status" value="1"/>
</dbReference>
<dbReference type="Pfam" id="PF09324">
    <property type="entry name" value="Sec7-like_HDS"/>
    <property type="match status" value="1"/>
</dbReference>
<dbReference type="Pfam" id="PF12783">
    <property type="entry name" value="Sec7-like_HUS"/>
    <property type="match status" value="1"/>
</dbReference>
<dbReference type="SMART" id="SM00222">
    <property type="entry name" value="Sec7"/>
    <property type="match status" value="1"/>
</dbReference>
<dbReference type="SUPFAM" id="SSF48371">
    <property type="entry name" value="ARM repeat"/>
    <property type="match status" value="2"/>
</dbReference>
<dbReference type="SUPFAM" id="SSF48425">
    <property type="entry name" value="Sec7 domain"/>
    <property type="match status" value="1"/>
</dbReference>
<dbReference type="PROSITE" id="PS50190">
    <property type="entry name" value="SEC7"/>
    <property type="match status" value="1"/>
</dbReference>
<feature type="chain" id="PRO_0000120216" description="ADP-ribosylation factor guanine nucleotide-exchange factor sec72">
    <location>
        <begin position="1"/>
        <end position="1822"/>
    </location>
</feature>
<feature type="domain" description="SEC7" evidence="2">
    <location>
        <begin position="701"/>
        <end position="889"/>
    </location>
</feature>
<feature type="region of interest" description="Disordered" evidence="3">
    <location>
        <begin position="1"/>
        <end position="54"/>
    </location>
</feature>
<feature type="region of interest" description="Disordered" evidence="3">
    <location>
        <begin position="66"/>
        <end position="126"/>
    </location>
</feature>
<feature type="region of interest" description="HDS1 domain" evidence="1">
    <location>
        <begin position="898"/>
        <end position="1106"/>
    </location>
</feature>
<feature type="region of interest" description="Disordered" evidence="3">
    <location>
        <begin position="1111"/>
        <end position="1131"/>
    </location>
</feature>
<feature type="region of interest" description="Disordered" evidence="3">
    <location>
        <begin position="1584"/>
        <end position="1610"/>
    </location>
</feature>
<feature type="short sequence motif" description="HUS box" evidence="1">
    <location>
        <begin position="547"/>
        <end position="551"/>
    </location>
</feature>
<feature type="compositionally biased region" description="Polar residues" evidence="3">
    <location>
        <begin position="72"/>
        <end position="84"/>
    </location>
</feature>
<feature type="compositionally biased region" description="Basic and acidic residues" evidence="3">
    <location>
        <begin position="85"/>
        <end position="110"/>
    </location>
</feature>
<feature type="compositionally biased region" description="Low complexity" evidence="3">
    <location>
        <begin position="1117"/>
        <end position="1130"/>
    </location>
</feature>
<feature type="compositionally biased region" description="Low complexity" evidence="3">
    <location>
        <begin position="1597"/>
        <end position="1610"/>
    </location>
</feature>
<feature type="modified residue" description="Phosphoserine" evidence="4">
    <location>
        <position position="44"/>
    </location>
</feature>
<feature type="modified residue" description="Phosphoserine" evidence="4">
    <location>
        <position position="122"/>
    </location>
</feature>
<feature type="modified residue" description="Phosphoserine" evidence="4">
    <location>
        <position position="125"/>
    </location>
</feature>
<feature type="modified residue" description="Phosphothreonine" evidence="4">
    <location>
        <position position="597"/>
    </location>
</feature>
<feature type="modified residue" description="Phosphoserine" evidence="4">
    <location>
        <position position="653"/>
    </location>
</feature>
<feature type="modified residue" description="Phosphothreonine" evidence="4">
    <location>
        <position position="654"/>
    </location>
</feature>
<feature type="modified residue" description="Phosphoserine" evidence="4">
    <location>
        <position position="669"/>
    </location>
</feature>
<feature type="modified residue" description="Phosphoserine" evidence="4">
    <location>
        <position position="1110"/>
    </location>
</feature>
<feature type="modified residue" description="Phosphoserine" evidence="4">
    <location>
        <position position="1606"/>
    </location>
</feature>
<feature type="modified residue" description="Phosphoserine" evidence="4">
    <location>
        <position position="1609"/>
    </location>
</feature>
<comment type="function">
    <text evidence="5 7">Guanine exchange factor that acts as an activator of arf1 at the trans-Golgi net-work and is thus involved in vesicular budding and traffic between compartments of the Golgi apparatus (Probable). Activation of Arf (ADP-ribosylation factor) GTPases is essential for vesicle formation via recruitment of cargo adapters and coat proteins necessary for Golgi trafficking (Probable). Involved in the resistance to tamoxifen (TAM), an anticancer drug used to treat estrogen receptor (ER)-positive breast cancer (PubMed:35172472).</text>
</comment>
<comment type="subcellular location">
    <subcellularLocation>
        <location evidence="1">Cytoplasm</location>
    </subcellularLocation>
    <subcellularLocation>
        <location evidence="1">Golgi apparatus</location>
    </subcellularLocation>
    <subcellularLocation>
        <location evidence="1">Golgi apparatus</location>
        <location evidence="1">trans-Golgi network</location>
    </subcellularLocation>
    <subcellularLocation>
        <location evidence="1">Cytoplasmic vesicle</location>
        <location evidence="1">COPI-coated vesicle membrane</location>
    </subcellularLocation>
    <subcellularLocation>
        <location evidence="1">Cytoplasmic vesicle</location>
        <location evidence="1">COPII-coated vesicle membrane</location>
    </subcellularLocation>
</comment>
<comment type="domain">
    <text evidence="1">The homology upstream of Sec7 (HUS) box is necessary for the allosteric activation of Ssec71.</text>
</comment>
<comment type="domain">
    <text evidence="1">The homology downstream of Sec7 (HDS) domain 1 is required for recruitment to the trans-Golgi network via its interaction with activated arf11.</text>
</comment>
<comment type="disruption phenotype">
    <text evidence="5">Sensitizes cells to tamoxifen (TAM).</text>
</comment>
<proteinExistence type="evidence at protein level"/>
<accession>Q9P7V5</accession>
<protein>
    <recommendedName>
        <fullName evidence="6">ADP-ribosylation factor guanine nucleotide-exchange factor sec72</fullName>
        <shortName evidence="6">ARF-GEP sec72</shortName>
    </recommendedName>
</protein>